<proteinExistence type="inferred from homology"/>
<feature type="chain" id="PRO_0000244526" description="Dynein light chain Tctex-type 3">
    <location>
        <begin position="1"/>
        <end position="116"/>
    </location>
</feature>
<feature type="modified residue" description="3'-nitrotyrosine" evidence="2">
    <location>
        <position position="4"/>
    </location>
</feature>
<sequence>MEEYHRPCDEVGFNADEAHNIVKECIDGVLGGEDYNQNNINQWTASIVEQSLAHLVKLGKAYKYIVTCAVVQRSPYGFHTASSCFWDTTSDGTCTVRWENRTMNCIVNVFAIAIVL</sequence>
<keyword id="KW-0131">Cell cycle</keyword>
<keyword id="KW-0132">Cell division</keyword>
<keyword id="KW-0137">Centromere</keyword>
<keyword id="KW-0158">Chromosome</keyword>
<keyword id="KW-0963">Cytoplasm</keyword>
<keyword id="KW-0206">Cytoskeleton</keyword>
<keyword id="KW-0243">Dynein</keyword>
<keyword id="KW-0995">Kinetochore</keyword>
<keyword id="KW-0493">Microtubule</keyword>
<keyword id="KW-0498">Mitosis</keyword>
<keyword id="KW-0505">Motor protein</keyword>
<keyword id="KW-0944">Nitration</keyword>
<keyword id="KW-0539">Nucleus</keyword>
<keyword id="KW-1185">Reference proteome</keyword>
<keyword id="KW-0813">Transport</keyword>
<organism>
    <name type="scientific">Ovis aries</name>
    <name type="common">Sheep</name>
    <dbReference type="NCBI Taxonomy" id="9940"/>
    <lineage>
        <taxon>Eukaryota</taxon>
        <taxon>Metazoa</taxon>
        <taxon>Chordata</taxon>
        <taxon>Craniata</taxon>
        <taxon>Vertebrata</taxon>
        <taxon>Euteleostomi</taxon>
        <taxon>Mammalia</taxon>
        <taxon>Eutheria</taxon>
        <taxon>Laurasiatheria</taxon>
        <taxon>Artiodactyla</taxon>
        <taxon>Ruminantia</taxon>
        <taxon>Pecora</taxon>
        <taxon>Bovidae</taxon>
        <taxon>Caprinae</taxon>
        <taxon>Ovis</taxon>
    </lineage>
</organism>
<name>DYLT3_SHEEP</name>
<reference key="1">
    <citation type="journal article" date="2003" name="J. Endocrinol.">
        <title>Characterization of two labor-induced genes, DSCR1 and TCTE1L, in the pregnant ovine myometrium.</title>
        <authorList>
            <person name="Wu W.X."/>
            <person name="Ma X.H."/>
            <person name="Zhang Q."/>
            <person name="Chakrabarty K."/>
            <person name="Nathanielsz P.W."/>
        </authorList>
    </citation>
    <scope>NUCLEOTIDE SEQUENCE [MRNA]</scope>
</reference>
<accession>Q6XXL8</accession>
<protein>
    <recommendedName>
        <fullName>Dynein light chain Tctex-type 3</fullName>
    </recommendedName>
    <alternativeName>
        <fullName>T-complex-associated testis-expressed 1-like</fullName>
    </alternativeName>
</protein>
<comment type="function">
    <text evidence="1">Acts as one of several non-catalytic accessory components of the cytoplasmic dynein 1 complex that are thought to be involved in linking dynein to cargos and to adapter proteins that regulate dynein function. Cytoplasmic dynein 1 acts as a motor for the intracellular retrograde motility of vesicles and organelles along microtubules. Probably binds BUB3 as part of transport cargo. Required for the efficient progression through mitosis (By similarity).</text>
</comment>
<comment type="subunit">
    <text evidence="1">Homodimer. The cytoplasmic dynein 1 complex consists of two catalytic heavy chains (HCs) and a number of non-catalytic subunits presented by intermediate chains (ICs), light intermediate chains (LICs) and light chains (LCs); the composition seems to vary in respect to the IC, LIC and LC composition. The heavy chain homodimer serves as a scaffold for the probable homodimeric assembly of the respective non-catalytic subunits. The ICs and LICs bind directly to the HC dimer and the LCs assemble on the IC dimer. DYNLT1 and DYNLT3 compete for association with dynein IC (DYNC1I1 or DYNC1I2). Self-associates. Interacts with DYNC1I1 and DYNC1I2. Interacts with BUB3. Interacts with SATB1 in nucleus to form complex with matrix attachment regions (MARs) of DNA (By similarity).</text>
</comment>
<comment type="subcellular location">
    <subcellularLocation>
        <location evidence="1">Nucleus</location>
    </subcellularLocation>
    <subcellularLocation>
        <location evidence="1">Cytoplasm</location>
        <location evidence="1">Cytoskeleton</location>
    </subcellularLocation>
    <subcellularLocation>
        <location evidence="1">Chromosome</location>
        <location evidence="1">Centromere</location>
        <location evidence="1">Kinetochore</location>
    </subcellularLocation>
</comment>
<comment type="similarity">
    <text evidence="3">Belongs to the dynein light chain Tctex-type family.</text>
</comment>
<evidence type="ECO:0000250" key="1"/>
<evidence type="ECO:0000250" key="2">
    <source>
        <dbReference type="UniProtKB" id="P56387"/>
    </source>
</evidence>
<evidence type="ECO:0000305" key="3"/>
<dbReference type="EMBL" id="AY205338">
    <property type="protein sequence ID" value="AAP41075.1"/>
    <property type="molecule type" value="mRNA"/>
</dbReference>
<dbReference type="RefSeq" id="NP_001009762.1">
    <property type="nucleotide sequence ID" value="NM_001009762.1"/>
</dbReference>
<dbReference type="SMR" id="Q6XXL8"/>
<dbReference type="STRING" id="9940.ENSOARP00000000106"/>
<dbReference type="PaxDb" id="9940-ENSOARP00000000106"/>
<dbReference type="Ensembl" id="ENSOART00215079853">
    <property type="protein sequence ID" value="ENSOARP00215044182"/>
    <property type="gene ID" value="ENSOARG00215046955"/>
</dbReference>
<dbReference type="Ensembl" id="ENSOART00225097219">
    <property type="protein sequence ID" value="ENSOARP00225051618"/>
    <property type="gene ID" value="ENSOARG00225058217"/>
</dbReference>
<dbReference type="GeneID" id="443256"/>
<dbReference type="KEGG" id="oas:443256"/>
<dbReference type="CTD" id="6990"/>
<dbReference type="eggNOG" id="KOG4081">
    <property type="taxonomic scope" value="Eukaryota"/>
</dbReference>
<dbReference type="OrthoDB" id="10059120at2759"/>
<dbReference type="Proteomes" id="UP000002356">
    <property type="component" value="Unplaced"/>
</dbReference>
<dbReference type="GO" id="GO:0005737">
    <property type="term" value="C:cytoplasm"/>
    <property type="evidence" value="ECO:0007669"/>
    <property type="project" value="UniProtKB-KW"/>
</dbReference>
<dbReference type="GO" id="GO:0005868">
    <property type="term" value="C:cytoplasmic dynein complex"/>
    <property type="evidence" value="ECO:0000250"/>
    <property type="project" value="UniProtKB"/>
</dbReference>
<dbReference type="GO" id="GO:0000776">
    <property type="term" value="C:kinetochore"/>
    <property type="evidence" value="ECO:0007669"/>
    <property type="project" value="UniProtKB-KW"/>
</dbReference>
<dbReference type="GO" id="GO:0005874">
    <property type="term" value="C:microtubule"/>
    <property type="evidence" value="ECO:0007669"/>
    <property type="project" value="UniProtKB-KW"/>
</dbReference>
<dbReference type="GO" id="GO:0005634">
    <property type="term" value="C:nucleus"/>
    <property type="evidence" value="ECO:0007669"/>
    <property type="project" value="UniProtKB-SubCell"/>
</dbReference>
<dbReference type="GO" id="GO:0045505">
    <property type="term" value="F:dynein intermediate chain binding"/>
    <property type="evidence" value="ECO:0007669"/>
    <property type="project" value="TreeGrafter"/>
</dbReference>
<dbReference type="GO" id="GO:0042802">
    <property type="term" value="F:identical protein binding"/>
    <property type="evidence" value="ECO:0007669"/>
    <property type="project" value="Ensembl"/>
</dbReference>
<dbReference type="GO" id="GO:0051301">
    <property type="term" value="P:cell division"/>
    <property type="evidence" value="ECO:0007669"/>
    <property type="project" value="UniProtKB-KW"/>
</dbReference>
<dbReference type="GO" id="GO:0007018">
    <property type="term" value="P:microtubule-based movement"/>
    <property type="evidence" value="ECO:0007669"/>
    <property type="project" value="TreeGrafter"/>
</dbReference>
<dbReference type="GO" id="GO:0007346">
    <property type="term" value="P:regulation of mitotic cell cycle"/>
    <property type="evidence" value="ECO:0000250"/>
    <property type="project" value="UniProtKB"/>
</dbReference>
<dbReference type="CDD" id="cd21463">
    <property type="entry name" value="DLC-like_DYNLT3"/>
    <property type="match status" value="1"/>
</dbReference>
<dbReference type="FunFam" id="3.30.1140.40:FF:000002">
    <property type="entry name" value="Dynein light chain Tctex-type 3"/>
    <property type="match status" value="1"/>
</dbReference>
<dbReference type="Gene3D" id="3.30.1140.40">
    <property type="entry name" value="Tctex-1"/>
    <property type="match status" value="1"/>
</dbReference>
<dbReference type="InterPro" id="IPR005334">
    <property type="entry name" value="Tctex-1-like"/>
</dbReference>
<dbReference type="InterPro" id="IPR038586">
    <property type="entry name" value="Tctex-1-like_sf"/>
</dbReference>
<dbReference type="PANTHER" id="PTHR21255:SF20">
    <property type="entry name" value="DYNEIN LIGHT CHAIN TCTEX-TYPE 3"/>
    <property type="match status" value="1"/>
</dbReference>
<dbReference type="PANTHER" id="PTHR21255">
    <property type="entry name" value="T-COMPLEX-ASSOCIATED-TESTIS-EXPRESSED 1/ DYNEIN LIGHT CHAIN"/>
    <property type="match status" value="1"/>
</dbReference>
<dbReference type="Pfam" id="PF03645">
    <property type="entry name" value="Tctex-1"/>
    <property type="match status" value="1"/>
</dbReference>
<gene>
    <name type="primary">DYNLT3</name>
    <name type="synonym">TCTE1L</name>
</gene>